<dbReference type="EMBL" id="CP000724">
    <property type="protein sequence ID" value="ABR48694.1"/>
    <property type="molecule type" value="Genomic_DNA"/>
</dbReference>
<dbReference type="RefSeq" id="WP_012063668.1">
    <property type="nucleotide sequence ID" value="NC_009633.1"/>
</dbReference>
<dbReference type="SMR" id="A6TR76"/>
<dbReference type="STRING" id="293826.Amet_2541"/>
<dbReference type="KEGG" id="amt:Amet_2541"/>
<dbReference type="eggNOG" id="COG1923">
    <property type="taxonomic scope" value="Bacteria"/>
</dbReference>
<dbReference type="HOGENOM" id="CLU_113688_0_2_9"/>
<dbReference type="Proteomes" id="UP000001572">
    <property type="component" value="Chromosome"/>
</dbReference>
<dbReference type="GO" id="GO:0005829">
    <property type="term" value="C:cytosol"/>
    <property type="evidence" value="ECO:0007669"/>
    <property type="project" value="TreeGrafter"/>
</dbReference>
<dbReference type="GO" id="GO:0003723">
    <property type="term" value="F:RNA binding"/>
    <property type="evidence" value="ECO:0007669"/>
    <property type="project" value="UniProtKB-UniRule"/>
</dbReference>
<dbReference type="GO" id="GO:0006355">
    <property type="term" value="P:regulation of DNA-templated transcription"/>
    <property type="evidence" value="ECO:0007669"/>
    <property type="project" value="InterPro"/>
</dbReference>
<dbReference type="GO" id="GO:0043487">
    <property type="term" value="P:regulation of RNA stability"/>
    <property type="evidence" value="ECO:0007669"/>
    <property type="project" value="TreeGrafter"/>
</dbReference>
<dbReference type="GO" id="GO:0045974">
    <property type="term" value="P:regulation of translation, ncRNA-mediated"/>
    <property type="evidence" value="ECO:0007669"/>
    <property type="project" value="TreeGrafter"/>
</dbReference>
<dbReference type="CDD" id="cd01716">
    <property type="entry name" value="Hfq"/>
    <property type="match status" value="1"/>
</dbReference>
<dbReference type="FunFam" id="2.30.30.100:FF:000012">
    <property type="entry name" value="RNA-binding protein Hfq"/>
    <property type="match status" value="1"/>
</dbReference>
<dbReference type="Gene3D" id="2.30.30.100">
    <property type="match status" value="1"/>
</dbReference>
<dbReference type="HAMAP" id="MF_00436">
    <property type="entry name" value="Hfq"/>
    <property type="match status" value="1"/>
</dbReference>
<dbReference type="InterPro" id="IPR005001">
    <property type="entry name" value="Hfq"/>
</dbReference>
<dbReference type="InterPro" id="IPR010920">
    <property type="entry name" value="LSM_dom_sf"/>
</dbReference>
<dbReference type="InterPro" id="IPR047575">
    <property type="entry name" value="Sm"/>
</dbReference>
<dbReference type="NCBIfam" id="TIGR02383">
    <property type="entry name" value="Hfq"/>
    <property type="match status" value="1"/>
</dbReference>
<dbReference type="NCBIfam" id="NF001602">
    <property type="entry name" value="PRK00395.1"/>
    <property type="match status" value="1"/>
</dbReference>
<dbReference type="PANTHER" id="PTHR34772">
    <property type="entry name" value="RNA-BINDING PROTEIN HFQ"/>
    <property type="match status" value="1"/>
</dbReference>
<dbReference type="PANTHER" id="PTHR34772:SF1">
    <property type="entry name" value="RNA-BINDING PROTEIN HFQ"/>
    <property type="match status" value="1"/>
</dbReference>
<dbReference type="Pfam" id="PF17209">
    <property type="entry name" value="Hfq"/>
    <property type="match status" value="1"/>
</dbReference>
<dbReference type="SUPFAM" id="SSF50182">
    <property type="entry name" value="Sm-like ribonucleoproteins"/>
    <property type="match status" value="1"/>
</dbReference>
<dbReference type="PROSITE" id="PS52002">
    <property type="entry name" value="SM"/>
    <property type="match status" value="1"/>
</dbReference>
<protein>
    <recommendedName>
        <fullName evidence="1">RNA-binding protein Hfq</fullName>
    </recommendedName>
</protein>
<proteinExistence type="inferred from homology"/>
<comment type="function">
    <text evidence="1">RNA chaperone that binds small regulatory RNA (sRNAs) and mRNAs to facilitate mRNA translational regulation in response to envelope stress, environmental stress and changes in metabolite concentrations. Also binds with high specificity to tRNAs.</text>
</comment>
<comment type="subunit">
    <text evidence="1">Homohexamer.</text>
</comment>
<comment type="similarity">
    <text evidence="1">Belongs to the Hfq family.</text>
</comment>
<accession>A6TR76</accession>
<sequence length="80" mass="9204">MKNNINLQDVFLNQVRKENIQITIYLVNGFQLKGFVKGFDNYTIVLDSDGKQQLIYKHAISTILPITPINFMQSSKKQGE</sequence>
<organism>
    <name type="scientific">Alkaliphilus metalliredigens (strain QYMF)</name>
    <dbReference type="NCBI Taxonomy" id="293826"/>
    <lineage>
        <taxon>Bacteria</taxon>
        <taxon>Bacillati</taxon>
        <taxon>Bacillota</taxon>
        <taxon>Clostridia</taxon>
        <taxon>Peptostreptococcales</taxon>
        <taxon>Natronincolaceae</taxon>
        <taxon>Alkaliphilus</taxon>
    </lineage>
</organism>
<evidence type="ECO:0000255" key="1">
    <source>
        <dbReference type="HAMAP-Rule" id="MF_00436"/>
    </source>
</evidence>
<evidence type="ECO:0000255" key="2">
    <source>
        <dbReference type="PROSITE-ProRule" id="PRU01346"/>
    </source>
</evidence>
<keyword id="KW-1185">Reference proteome</keyword>
<keyword id="KW-0694">RNA-binding</keyword>
<keyword id="KW-0346">Stress response</keyword>
<name>HFQ_ALKMQ</name>
<gene>
    <name evidence="1" type="primary">hfq</name>
    <name type="ordered locus">Amet_2541</name>
</gene>
<reference key="1">
    <citation type="journal article" date="2016" name="Genome Announc.">
        <title>Complete genome sequence of Alkaliphilus metalliredigens strain QYMF, an alkaliphilic and metal-reducing bacterium isolated from borax-contaminated leachate ponds.</title>
        <authorList>
            <person name="Hwang C."/>
            <person name="Copeland A."/>
            <person name="Lucas S."/>
            <person name="Lapidus A."/>
            <person name="Barry K."/>
            <person name="Detter J.C."/>
            <person name="Glavina Del Rio T."/>
            <person name="Hammon N."/>
            <person name="Israni S."/>
            <person name="Dalin E."/>
            <person name="Tice H."/>
            <person name="Pitluck S."/>
            <person name="Chertkov O."/>
            <person name="Brettin T."/>
            <person name="Bruce D."/>
            <person name="Han C."/>
            <person name="Schmutz J."/>
            <person name="Larimer F."/>
            <person name="Land M.L."/>
            <person name="Hauser L."/>
            <person name="Kyrpides N."/>
            <person name="Mikhailova N."/>
            <person name="Ye Q."/>
            <person name="Zhou J."/>
            <person name="Richardson P."/>
            <person name="Fields M.W."/>
        </authorList>
    </citation>
    <scope>NUCLEOTIDE SEQUENCE [LARGE SCALE GENOMIC DNA]</scope>
    <source>
        <strain>QYMF</strain>
    </source>
</reference>
<feature type="chain" id="PRO_1000060235" description="RNA-binding protein Hfq">
    <location>
        <begin position="1"/>
        <end position="80"/>
    </location>
</feature>
<feature type="domain" description="Sm" evidence="2">
    <location>
        <begin position="9"/>
        <end position="69"/>
    </location>
</feature>